<reference key="1">
    <citation type="journal article" date="2008" name="Antimicrob. Agents Chemother.">
        <title>Mutated response regulator graR is responsible for phenotypic conversion of Staphylococcus aureus from heterogeneous vancomycin-intermediate resistance to vancomycin-intermediate resistance.</title>
        <authorList>
            <person name="Neoh H.-M."/>
            <person name="Cui L."/>
            <person name="Yuzawa H."/>
            <person name="Takeuchi F."/>
            <person name="Matsuo M."/>
            <person name="Hiramatsu K."/>
        </authorList>
    </citation>
    <scope>NUCLEOTIDE SEQUENCE [LARGE SCALE GENOMIC DNA]</scope>
    <source>
        <strain>Mu3 / ATCC 700698</strain>
    </source>
</reference>
<proteinExistence type="inferred from homology"/>
<keyword id="KW-0028">Amino-acid biosynthesis</keyword>
<keyword id="KW-0055">Arginine biosynthesis</keyword>
<keyword id="KW-0963">Cytoplasm</keyword>
<keyword id="KW-0521">NADP</keyword>
<keyword id="KW-0560">Oxidoreductase</keyword>
<protein>
    <recommendedName>
        <fullName evidence="1">N-acetyl-gamma-glutamyl-phosphate reductase</fullName>
        <shortName evidence="1">AGPR</shortName>
        <ecNumber evidence="1">1.2.1.38</ecNumber>
    </recommendedName>
    <alternativeName>
        <fullName evidence="1">N-acetyl-glutamate semialdehyde dehydrogenase</fullName>
        <shortName evidence="1">NAGSA dehydrogenase</shortName>
    </alternativeName>
</protein>
<dbReference type="EC" id="1.2.1.38" evidence="1"/>
<dbReference type="EMBL" id="AP009324">
    <property type="protein sequence ID" value="BAF77066.1"/>
    <property type="molecule type" value="Genomic_DNA"/>
</dbReference>
<dbReference type="RefSeq" id="WP_000598482.1">
    <property type="nucleotide sequence ID" value="NC_009782.1"/>
</dbReference>
<dbReference type="SMR" id="A7WXH5"/>
<dbReference type="KEGG" id="saw:SAHV_0183"/>
<dbReference type="HOGENOM" id="CLU_006384_0_1_9"/>
<dbReference type="UniPathway" id="UPA00068">
    <property type="reaction ID" value="UER00108"/>
</dbReference>
<dbReference type="GO" id="GO:0005737">
    <property type="term" value="C:cytoplasm"/>
    <property type="evidence" value="ECO:0007669"/>
    <property type="project" value="UniProtKB-SubCell"/>
</dbReference>
<dbReference type="GO" id="GO:0003942">
    <property type="term" value="F:N-acetyl-gamma-glutamyl-phosphate reductase activity"/>
    <property type="evidence" value="ECO:0007669"/>
    <property type="project" value="UniProtKB-UniRule"/>
</dbReference>
<dbReference type="GO" id="GO:0051287">
    <property type="term" value="F:NAD binding"/>
    <property type="evidence" value="ECO:0007669"/>
    <property type="project" value="InterPro"/>
</dbReference>
<dbReference type="GO" id="GO:0070401">
    <property type="term" value="F:NADP+ binding"/>
    <property type="evidence" value="ECO:0007669"/>
    <property type="project" value="InterPro"/>
</dbReference>
<dbReference type="GO" id="GO:0006526">
    <property type="term" value="P:L-arginine biosynthetic process"/>
    <property type="evidence" value="ECO:0007669"/>
    <property type="project" value="UniProtKB-UniRule"/>
</dbReference>
<dbReference type="CDD" id="cd23934">
    <property type="entry name" value="AGPR_1_C"/>
    <property type="match status" value="1"/>
</dbReference>
<dbReference type="CDD" id="cd17895">
    <property type="entry name" value="AGPR_1_N"/>
    <property type="match status" value="1"/>
</dbReference>
<dbReference type="FunFam" id="3.30.360.10:FF:000014">
    <property type="entry name" value="N-acetyl-gamma-glutamyl-phosphate reductase"/>
    <property type="match status" value="1"/>
</dbReference>
<dbReference type="Gene3D" id="3.30.360.10">
    <property type="entry name" value="Dihydrodipicolinate Reductase, domain 2"/>
    <property type="match status" value="1"/>
</dbReference>
<dbReference type="Gene3D" id="3.40.50.720">
    <property type="entry name" value="NAD(P)-binding Rossmann-like Domain"/>
    <property type="match status" value="1"/>
</dbReference>
<dbReference type="HAMAP" id="MF_00150">
    <property type="entry name" value="ArgC_type1"/>
    <property type="match status" value="1"/>
</dbReference>
<dbReference type="InterPro" id="IPR023013">
    <property type="entry name" value="AGPR_AS"/>
</dbReference>
<dbReference type="InterPro" id="IPR000706">
    <property type="entry name" value="AGPR_type-1"/>
</dbReference>
<dbReference type="InterPro" id="IPR036291">
    <property type="entry name" value="NAD(P)-bd_dom_sf"/>
</dbReference>
<dbReference type="InterPro" id="IPR050085">
    <property type="entry name" value="NAGSA_dehydrogenase"/>
</dbReference>
<dbReference type="InterPro" id="IPR000534">
    <property type="entry name" value="Semialdehyde_DH_NAD-bd"/>
</dbReference>
<dbReference type="NCBIfam" id="TIGR01850">
    <property type="entry name" value="argC"/>
    <property type="match status" value="1"/>
</dbReference>
<dbReference type="PANTHER" id="PTHR32338:SF10">
    <property type="entry name" value="N-ACETYL-GAMMA-GLUTAMYL-PHOSPHATE REDUCTASE, CHLOROPLASTIC-RELATED"/>
    <property type="match status" value="1"/>
</dbReference>
<dbReference type="PANTHER" id="PTHR32338">
    <property type="entry name" value="N-ACETYL-GAMMA-GLUTAMYL-PHOSPHATE REDUCTASE, CHLOROPLASTIC-RELATED-RELATED"/>
    <property type="match status" value="1"/>
</dbReference>
<dbReference type="Pfam" id="PF01118">
    <property type="entry name" value="Semialdhyde_dh"/>
    <property type="match status" value="1"/>
</dbReference>
<dbReference type="Pfam" id="PF22698">
    <property type="entry name" value="Semialdhyde_dhC_1"/>
    <property type="match status" value="1"/>
</dbReference>
<dbReference type="SMART" id="SM00859">
    <property type="entry name" value="Semialdhyde_dh"/>
    <property type="match status" value="1"/>
</dbReference>
<dbReference type="SUPFAM" id="SSF55347">
    <property type="entry name" value="Glyceraldehyde-3-phosphate dehydrogenase-like, C-terminal domain"/>
    <property type="match status" value="1"/>
</dbReference>
<dbReference type="SUPFAM" id="SSF51735">
    <property type="entry name" value="NAD(P)-binding Rossmann-fold domains"/>
    <property type="match status" value="1"/>
</dbReference>
<dbReference type="PROSITE" id="PS01224">
    <property type="entry name" value="ARGC"/>
    <property type="match status" value="1"/>
</dbReference>
<comment type="function">
    <text evidence="1">Catalyzes the NADPH-dependent reduction of N-acetyl-5-glutamyl phosphate to yield N-acetyl-L-glutamate 5-semialdehyde.</text>
</comment>
<comment type="catalytic activity">
    <reaction evidence="1">
        <text>N-acetyl-L-glutamate 5-semialdehyde + phosphate + NADP(+) = N-acetyl-L-glutamyl 5-phosphate + NADPH + H(+)</text>
        <dbReference type="Rhea" id="RHEA:21588"/>
        <dbReference type="ChEBI" id="CHEBI:15378"/>
        <dbReference type="ChEBI" id="CHEBI:29123"/>
        <dbReference type="ChEBI" id="CHEBI:43474"/>
        <dbReference type="ChEBI" id="CHEBI:57783"/>
        <dbReference type="ChEBI" id="CHEBI:57936"/>
        <dbReference type="ChEBI" id="CHEBI:58349"/>
        <dbReference type="EC" id="1.2.1.38"/>
    </reaction>
</comment>
<comment type="pathway">
    <text evidence="1">Amino-acid biosynthesis; L-arginine biosynthesis; N(2)-acetyl-L-ornithine from L-glutamate: step 3/4.</text>
</comment>
<comment type="subcellular location">
    <subcellularLocation>
        <location evidence="1">Cytoplasm</location>
    </subcellularLocation>
</comment>
<comment type="similarity">
    <text evidence="1">Belongs to the NAGSA dehydrogenase family. Type 1 subfamily.</text>
</comment>
<feature type="chain" id="PRO_1000011065" description="N-acetyl-gamma-glutamyl-phosphate reductase">
    <location>
        <begin position="1"/>
        <end position="343"/>
    </location>
</feature>
<feature type="active site" evidence="1">
    <location>
        <position position="147"/>
    </location>
</feature>
<evidence type="ECO:0000255" key="1">
    <source>
        <dbReference type="HAMAP-Rule" id="MF_00150"/>
    </source>
</evidence>
<sequence>MIKVGIVGGSGYGAIELIRLLQTHPHVTIAHIYSHSKVDEPLKLTFPHLQHIMQHFEALTVDNNDCDVIFFATPAPVSKTCIPPLVEKGIHVIDLSGAFRIKNREIYEAYYKETAAAQDDLNHAIYSISEWQSFDNNGTKLISNPGCFPTATLLALHPLISEKIVDLSSIIIDAKTGVSGAGRSLSQRVHFSEMNENLSAYAIGNHKHKPEIEQYLSIIAGQDVSVIFTPHLVPMTRGILSTIYVKFSSEYTTESLHKLMTSYYANQPFVRIRDIGTFPTTKEVLGSNYCDIGIYVDETTQTAILVSVIDNLVKGASGQAIQNLNILYDFEVTTGLNQSPVYP</sequence>
<gene>
    <name evidence="1" type="primary">argC</name>
    <name type="ordered locus">SAHV_0183</name>
</gene>
<organism>
    <name type="scientific">Staphylococcus aureus (strain Mu3 / ATCC 700698)</name>
    <dbReference type="NCBI Taxonomy" id="418127"/>
    <lineage>
        <taxon>Bacteria</taxon>
        <taxon>Bacillati</taxon>
        <taxon>Bacillota</taxon>
        <taxon>Bacilli</taxon>
        <taxon>Bacillales</taxon>
        <taxon>Staphylococcaceae</taxon>
        <taxon>Staphylococcus</taxon>
    </lineage>
</organism>
<name>ARGC_STAA1</name>
<accession>A7WXH5</accession>